<dbReference type="EC" id="3.6.4.13"/>
<dbReference type="EMBL" id="CH445334">
    <property type="protein sequence ID" value="EAT85749.2"/>
    <property type="status" value="ALT_SEQ"/>
    <property type="molecule type" value="Genomic_DNA"/>
</dbReference>
<dbReference type="RefSeq" id="XP_001797451.1">
    <property type="nucleotide sequence ID" value="XM_001797399.1"/>
</dbReference>
<dbReference type="SMR" id="Q0UMB6"/>
<dbReference type="FunCoup" id="Q0UMB6">
    <property type="interactions" value="981"/>
</dbReference>
<dbReference type="STRING" id="321614.Q0UMB6"/>
<dbReference type="GeneID" id="5974341"/>
<dbReference type="KEGG" id="pno:SNOG_07098"/>
<dbReference type="VEuPathDB" id="FungiDB:JI435_070980"/>
<dbReference type="eggNOG" id="KOG0337">
    <property type="taxonomic scope" value="Eukaryota"/>
</dbReference>
<dbReference type="InParanoid" id="Q0UMB6"/>
<dbReference type="OMA" id="EDQFGMM"/>
<dbReference type="Proteomes" id="UP000001055">
    <property type="component" value="Unassembled WGS sequence"/>
</dbReference>
<dbReference type="GO" id="GO:0005730">
    <property type="term" value="C:nucleolus"/>
    <property type="evidence" value="ECO:0000318"/>
    <property type="project" value="GO_Central"/>
</dbReference>
<dbReference type="GO" id="GO:0005524">
    <property type="term" value="F:ATP binding"/>
    <property type="evidence" value="ECO:0007669"/>
    <property type="project" value="UniProtKB-KW"/>
</dbReference>
<dbReference type="GO" id="GO:0016887">
    <property type="term" value="F:ATP hydrolysis activity"/>
    <property type="evidence" value="ECO:0007669"/>
    <property type="project" value="RHEA"/>
</dbReference>
<dbReference type="GO" id="GO:0003723">
    <property type="term" value="F:RNA binding"/>
    <property type="evidence" value="ECO:0007669"/>
    <property type="project" value="UniProtKB-KW"/>
</dbReference>
<dbReference type="GO" id="GO:0003724">
    <property type="term" value="F:RNA helicase activity"/>
    <property type="evidence" value="ECO:0007669"/>
    <property type="project" value="UniProtKB-EC"/>
</dbReference>
<dbReference type="GO" id="GO:0006364">
    <property type="term" value="P:rRNA processing"/>
    <property type="evidence" value="ECO:0000318"/>
    <property type="project" value="GO_Central"/>
</dbReference>
<dbReference type="CDD" id="cd17959">
    <property type="entry name" value="DEADc_DDX54"/>
    <property type="match status" value="1"/>
</dbReference>
<dbReference type="FunFam" id="3.40.50.300:FF:000865">
    <property type="entry name" value="ATP-dependent RNA helicase DDX54"/>
    <property type="match status" value="1"/>
</dbReference>
<dbReference type="Gene3D" id="3.40.50.300">
    <property type="entry name" value="P-loop containing nucleotide triphosphate hydrolases"/>
    <property type="match status" value="2"/>
</dbReference>
<dbReference type="InterPro" id="IPR012541">
    <property type="entry name" value="DBP10_C"/>
</dbReference>
<dbReference type="InterPro" id="IPR033517">
    <property type="entry name" value="DDX54/DBP10_DEAD-box_helicase"/>
</dbReference>
<dbReference type="InterPro" id="IPR011545">
    <property type="entry name" value="DEAD/DEAH_box_helicase_dom"/>
</dbReference>
<dbReference type="InterPro" id="IPR050079">
    <property type="entry name" value="DEAD_box_RNA_helicase"/>
</dbReference>
<dbReference type="InterPro" id="IPR014001">
    <property type="entry name" value="Helicase_ATP-bd"/>
</dbReference>
<dbReference type="InterPro" id="IPR001650">
    <property type="entry name" value="Helicase_C-like"/>
</dbReference>
<dbReference type="InterPro" id="IPR027417">
    <property type="entry name" value="P-loop_NTPase"/>
</dbReference>
<dbReference type="InterPro" id="IPR000629">
    <property type="entry name" value="RNA-helicase_DEAD-box_CS"/>
</dbReference>
<dbReference type="InterPro" id="IPR014014">
    <property type="entry name" value="RNA_helicase_DEAD_Q_motif"/>
</dbReference>
<dbReference type="PANTHER" id="PTHR47959">
    <property type="entry name" value="ATP-DEPENDENT RNA HELICASE RHLE-RELATED"/>
    <property type="match status" value="1"/>
</dbReference>
<dbReference type="PANTHER" id="PTHR47959:SF8">
    <property type="entry name" value="RNA HELICASE"/>
    <property type="match status" value="1"/>
</dbReference>
<dbReference type="Pfam" id="PF08147">
    <property type="entry name" value="DBP10CT"/>
    <property type="match status" value="1"/>
</dbReference>
<dbReference type="Pfam" id="PF00270">
    <property type="entry name" value="DEAD"/>
    <property type="match status" value="1"/>
</dbReference>
<dbReference type="Pfam" id="PF00271">
    <property type="entry name" value="Helicase_C"/>
    <property type="match status" value="1"/>
</dbReference>
<dbReference type="SMART" id="SM01123">
    <property type="entry name" value="DBP10CT"/>
    <property type="match status" value="1"/>
</dbReference>
<dbReference type="SMART" id="SM00487">
    <property type="entry name" value="DEXDc"/>
    <property type="match status" value="1"/>
</dbReference>
<dbReference type="SUPFAM" id="SSF52540">
    <property type="entry name" value="P-loop containing nucleoside triphosphate hydrolases"/>
    <property type="match status" value="2"/>
</dbReference>
<dbReference type="PROSITE" id="PS00039">
    <property type="entry name" value="DEAD_ATP_HELICASE"/>
    <property type="match status" value="1"/>
</dbReference>
<dbReference type="PROSITE" id="PS51192">
    <property type="entry name" value="HELICASE_ATP_BIND_1"/>
    <property type="match status" value="1"/>
</dbReference>
<dbReference type="PROSITE" id="PS51194">
    <property type="entry name" value="HELICASE_CTER"/>
    <property type="match status" value="1"/>
</dbReference>
<dbReference type="PROSITE" id="PS51195">
    <property type="entry name" value="Q_MOTIF"/>
    <property type="match status" value="1"/>
</dbReference>
<keyword id="KW-0067">ATP-binding</keyword>
<keyword id="KW-0347">Helicase</keyword>
<keyword id="KW-0378">Hydrolase</keyword>
<keyword id="KW-0547">Nucleotide-binding</keyword>
<keyword id="KW-0539">Nucleus</keyword>
<keyword id="KW-0690">Ribosome biogenesis</keyword>
<keyword id="KW-0694">RNA-binding</keyword>
<keyword id="KW-0698">rRNA processing</keyword>
<accession>Q0UMB6</accession>
<protein>
    <recommendedName>
        <fullName>ATP-dependent RNA helicase DBP10</fullName>
        <ecNumber>3.6.4.13</ecNumber>
    </recommendedName>
</protein>
<feature type="chain" id="PRO_0000256046" description="ATP-dependent RNA helicase DBP10">
    <location>
        <begin position="1"/>
        <end position="878"/>
    </location>
</feature>
<feature type="domain" description="Helicase ATP-binding" evidence="2">
    <location>
        <begin position="109"/>
        <end position="281"/>
    </location>
</feature>
<feature type="domain" description="Helicase C-terminal" evidence="3">
    <location>
        <begin position="349"/>
        <end position="538"/>
    </location>
</feature>
<feature type="region of interest" description="Disordered" evidence="4">
    <location>
        <begin position="332"/>
        <end position="354"/>
    </location>
</feature>
<feature type="region of interest" description="Disordered" evidence="4">
    <location>
        <begin position="517"/>
        <end position="536"/>
    </location>
</feature>
<feature type="region of interest" description="Disordered" evidence="4">
    <location>
        <begin position="601"/>
        <end position="666"/>
    </location>
</feature>
<feature type="region of interest" description="Disordered" evidence="4">
    <location>
        <begin position="726"/>
        <end position="758"/>
    </location>
</feature>
<feature type="region of interest" description="Disordered" evidence="4">
    <location>
        <begin position="787"/>
        <end position="878"/>
    </location>
</feature>
<feature type="short sequence motif" description="Q motif">
    <location>
        <begin position="78"/>
        <end position="106"/>
    </location>
</feature>
<feature type="short sequence motif" description="DEAD box">
    <location>
        <begin position="229"/>
        <end position="232"/>
    </location>
</feature>
<feature type="compositionally biased region" description="Polar residues" evidence="4">
    <location>
        <begin position="521"/>
        <end position="531"/>
    </location>
</feature>
<feature type="compositionally biased region" description="Polar residues" evidence="4">
    <location>
        <begin position="606"/>
        <end position="620"/>
    </location>
</feature>
<feature type="compositionally biased region" description="Acidic residues" evidence="4">
    <location>
        <begin position="627"/>
        <end position="638"/>
    </location>
</feature>
<feature type="compositionally biased region" description="Basic and acidic residues" evidence="4">
    <location>
        <begin position="809"/>
        <end position="870"/>
    </location>
</feature>
<feature type="binding site" evidence="2">
    <location>
        <begin position="122"/>
        <end position="129"/>
    </location>
    <ligand>
        <name>ATP</name>
        <dbReference type="ChEBI" id="CHEBI:30616"/>
    </ligand>
</feature>
<name>DBP10_PHANO</name>
<comment type="function">
    <text evidence="1">ATP-binding RNA helicase involved in the biogenesis of 60S ribosomal subunits and is required for the normal formation of 25S and 5.8S rRNAs.</text>
</comment>
<comment type="catalytic activity">
    <reaction>
        <text>ATP + H2O = ADP + phosphate + H(+)</text>
        <dbReference type="Rhea" id="RHEA:13065"/>
        <dbReference type="ChEBI" id="CHEBI:15377"/>
        <dbReference type="ChEBI" id="CHEBI:15378"/>
        <dbReference type="ChEBI" id="CHEBI:30616"/>
        <dbReference type="ChEBI" id="CHEBI:43474"/>
        <dbReference type="ChEBI" id="CHEBI:456216"/>
        <dbReference type="EC" id="3.6.4.13"/>
    </reaction>
</comment>
<comment type="subcellular location">
    <subcellularLocation>
        <location evidence="1">Nucleus</location>
        <location evidence="1">Nucleolus</location>
    </subcellularLocation>
</comment>
<comment type="domain">
    <text>The Q motif is unique to and characteristic of the DEAD box family of RNA helicases and controls ATP binding and hydrolysis.</text>
</comment>
<comment type="similarity">
    <text evidence="5">Belongs to the DEAD box helicase family. DDX54/DBP10 subfamily.</text>
</comment>
<comment type="sequence caution" evidence="5">
    <conflict type="erroneous gene model prediction">
        <sequence resource="EMBL-CDS" id="EAT85749"/>
    </conflict>
</comment>
<organism>
    <name type="scientific">Phaeosphaeria nodorum (strain SN15 / ATCC MYA-4574 / FGSC 10173)</name>
    <name type="common">Glume blotch fungus</name>
    <name type="synonym">Parastagonospora nodorum</name>
    <dbReference type="NCBI Taxonomy" id="321614"/>
    <lineage>
        <taxon>Eukaryota</taxon>
        <taxon>Fungi</taxon>
        <taxon>Dikarya</taxon>
        <taxon>Ascomycota</taxon>
        <taxon>Pezizomycotina</taxon>
        <taxon>Dothideomycetes</taxon>
        <taxon>Pleosporomycetidae</taxon>
        <taxon>Pleosporales</taxon>
        <taxon>Pleosporineae</taxon>
        <taxon>Phaeosphaeriaceae</taxon>
        <taxon>Parastagonospora</taxon>
    </lineage>
</organism>
<proteinExistence type="inferred from homology"/>
<gene>
    <name type="primary">DBP10</name>
    <name type="ORF">SNOG_07098</name>
</gene>
<evidence type="ECO:0000250" key="1"/>
<evidence type="ECO:0000255" key="2">
    <source>
        <dbReference type="PROSITE-ProRule" id="PRU00541"/>
    </source>
</evidence>
<evidence type="ECO:0000255" key="3">
    <source>
        <dbReference type="PROSITE-ProRule" id="PRU00542"/>
    </source>
</evidence>
<evidence type="ECO:0000256" key="4">
    <source>
        <dbReference type="SAM" id="MobiDB-lite"/>
    </source>
</evidence>
<evidence type="ECO:0000305" key="5"/>
<sequence>MAPRASSPALSENEFDIFDALAGGDEAAQPMRVTADLGIDLEFGSDDGSDDEAFIAAKQAAANRKNANAPGKSGKKGGGFQAMGLNVALLKAIAQKGFKIPTPIQRKAVPLILQGDDVVGMARTGSGKTAAFVIPMIERLKTHSAKVGARGVIMSPSRELALQTLKVVKEFGRGTDLRTILLVGGDSLEEQFNSMTTNPDIIIATPGRFLHLKVEMGLDLSSVQYIVFDEADRLFEMGFAAQLAEILYALPTSRQTLLFSATLPKSLVEFARAGLQEPKLIRLDAESKISPDLKSAYFTIKSGDRDGALIHLLENVIKMPVGQTEVWKQAKEEADNLSKGKKRKRGSGNPKDAPVEESTIIFAATKHRVEYLSTLLKAAGYPVSYVYGNLDQTARQEQVKDFRAGLTRILVVTDVAARGYRHATHKPRHQLRLPFSTKNLCSSSGEDGPRWAEGLGIQPVQTCRSAISHRLTNVPWQTPSGCLAPYQLEPSVELVNKQLTDDEDLVNLLNVAEKGERQYQRTRNQASNQSVHRAKDLASDSKFAETHMLFNDEMHDALRAKEDMLERIQGFRPAETVFEIGKRGTNSEAAEIMRKRRVAVERQKTKQAFNKANDESSGLTRPTADALPDDELDSEDDQQAAVGDYESESDELEVTVSQPESKKSGKDVWRSDEFFMSYLPKENFAEEKAYGVQGGDAGNSNFVSAARSAEMSLVNDEIQGFADASKPRMRWDKKSKKYVSRANDEDGSKGAKMIRGESGQKIAASFRSGRFDDWRKANKVKMQRVGEMEAPNRSTQFNSGGPRYKHKAEKAPKQADRYRDDYHVQKQRVQEAKEKRIGHFKDGGAKNELKDVDTVRKERRVQEKRKEKNARPSKKRKF</sequence>
<reference key="1">
    <citation type="journal article" date="2007" name="Plant Cell">
        <title>Dothideomycete-plant interactions illuminated by genome sequencing and EST analysis of the wheat pathogen Stagonospora nodorum.</title>
        <authorList>
            <person name="Hane J.K."/>
            <person name="Lowe R.G.T."/>
            <person name="Solomon P.S."/>
            <person name="Tan K.-C."/>
            <person name="Schoch C.L."/>
            <person name="Spatafora J.W."/>
            <person name="Crous P.W."/>
            <person name="Kodira C.D."/>
            <person name="Birren B.W."/>
            <person name="Galagan J.E."/>
            <person name="Torriani S.F.F."/>
            <person name="McDonald B.A."/>
            <person name="Oliver R.P."/>
        </authorList>
    </citation>
    <scope>NUCLEOTIDE SEQUENCE [LARGE SCALE GENOMIC DNA]</scope>
    <source>
        <strain>SN15 / ATCC MYA-4574 / FGSC 10173</strain>
    </source>
</reference>